<organism>
    <name type="scientific">Mus musculus</name>
    <name type="common">Mouse</name>
    <dbReference type="NCBI Taxonomy" id="10090"/>
    <lineage>
        <taxon>Eukaryota</taxon>
        <taxon>Metazoa</taxon>
        <taxon>Chordata</taxon>
        <taxon>Craniata</taxon>
        <taxon>Vertebrata</taxon>
        <taxon>Euteleostomi</taxon>
        <taxon>Mammalia</taxon>
        <taxon>Eutheria</taxon>
        <taxon>Euarchontoglires</taxon>
        <taxon>Glires</taxon>
        <taxon>Rodentia</taxon>
        <taxon>Myomorpha</taxon>
        <taxon>Muroidea</taxon>
        <taxon>Muridae</taxon>
        <taxon>Murinae</taxon>
        <taxon>Mus</taxon>
        <taxon>Mus</taxon>
    </lineage>
</organism>
<gene>
    <name type="primary">Mmp19</name>
    <name type="synonym">Rasi</name>
</gene>
<name>MMP19_MOUSE</name>
<dbReference type="EC" id="3.4.24.-"/>
<dbReference type="EMBL" id="AF155221">
    <property type="protein sequence ID" value="AAF73292.1"/>
    <property type="molecule type" value="mRNA"/>
</dbReference>
<dbReference type="EMBL" id="AF162446">
    <property type="protein sequence ID" value="AAF80464.1"/>
    <property type="molecule type" value="mRNA"/>
</dbReference>
<dbReference type="EMBL" id="AF153199">
    <property type="protein sequence ID" value="AAG29880.1"/>
    <property type="molecule type" value="mRNA"/>
</dbReference>
<dbReference type="EMBL" id="AK086808">
    <property type="protein sequence ID" value="BAC39747.1"/>
    <property type="molecule type" value="mRNA"/>
</dbReference>
<dbReference type="CCDS" id="CCDS24292.1"/>
<dbReference type="RefSeq" id="NP_067387.1">
    <property type="nucleotide sequence ID" value="NM_021412.3"/>
</dbReference>
<dbReference type="SMR" id="Q9JHI0"/>
<dbReference type="FunCoup" id="Q9JHI0">
    <property type="interactions" value="324"/>
</dbReference>
<dbReference type="STRING" id="10090.ENSMUSP00000026411"/>
<dbReference type="MEROPS" id="M10.021"/>
<dbReference type="GlyCosmos" id="Q9JHI0">
    <property type="glycosylation" value="4 sites, No reported glycans"/>
</dbReference>
<dbReference type="GlyGen" id="Q9JHI0">
    <property type="glycosylation" value="4 sites"/>
</dbReference>
<dbReference type="iPTMnet" id="Q9JHI0"/>
<dbReference type="PhosphoSitePlus" id="Q9JHI0"/>
<dbReference type="PaxDb" id="10090-ENSMUSP00000026411"/>
<dbReference type="ProteomicsDB" id="291476"/>
<dbReference type="Antibodypedia" id="2017">
    <property type="antibodies" value="478 antibodies from 37 providers"/>
</dbReference>
<dbReference type="DNASU" id="58223"/>
<dbReference type="Ensembl" id="ENSMUST00000026411.8">
    <property type="protein sequence ID" value="ENSMUSP00000026411.7"/>
    <property type="gene ID" value="ENSMUSG00000025355.8"/>
</dbReference>
<dbReference type="GeneID" id="58223"/>
<dbReference type="KEGG" id="mmu:58223"/>
<dbReference type="UCSC" id="uc007hof.1">
    <property type="organism name" value="mouse"/>
</dbReference>
<dbReference type="AGR" id="MGI:1927899"/>
<dbReference type="CTD" id="4327"/>
<dbReference type="MGI" id="MGI:1927899">
    <property type="gene designation" value="Mmp19"/>
</dbReference>
<dbReference type="VEuPathDB" id="HostDB:ENSMUSG00000025355"/>
<dbReference type="eggNOG" id="KOG1565">
    <property type="taxonomic scope" value="Eukaryota"/>
</dbReference>
<dbReference type="GeneTree" id="ENSGT00940000158593"/>
<dbReference type="HOGENOM" id="CLU_015489_8_3_1"/>
<dbReference type="InParanoid" id="Q9JHI0"/>
<dbReference type="OMA" id="CRPQTID"/>
<dbReference type="OrthoDB" id="406838at2759"/>
<dbReference type="PhylomeDB" id="Q9JHI0"/>
<dbReference type="TreeFam" id="TF315428"/>
<dbReference type="Reactome" id="R-MMU-1474228">
    <property type="pathway name" value="Degradation of the extracellular matrix"/>
</dbReference>
<dbReference type="BioGRID-ORCS" id="58223">
    <property type="hits" value="0 hits in 77 CRISPR screens"/>
</dbReference>
<dbReference type="ChiTaRS" id="Mmp19">
    <property type="organism name" value="mouse"/>
</dbReference>
<dbReference type="PRO" id="PR:Q9JHI0"/>
<dbReference type="Proteomes" id="UP000000589">
    <property type="component" value="Chromosome 10"/>
</dbReference>
<dbReference type="RNAct" id="Q9JHI0">
    <property type="molecule type" value="protein"/>
</dbReference>
<dbReference type="Bgee" id="ENSMUSG00000025355">
    <property type="expression patterns" value="Expressed in liver and 103 other cell types or tissues"/>
</dbReference>
<dbReference type="ExpressionAtlas" id="Q9JHI0">
    <property type="expression patterns" value="baseline and differential"/>
</dbReference>
<dbReference type="GO" id="GO:0031012">
    <property type="term" value="C:extracellular matrix"/>
    <property type="evidence" value="ECO:0007669"/>
    <property type="project" value="InterPro"/>
</dbReference>
<dbReference type="GO" id="GO:0005576">
    <property type="term" value="C:extracellular region"/>
    <property type="evidence" value="ECO:0000304"/>
    <property type="project" value="Reactome"/>
</dbReference>
<dbReference type="GO" id="GO:0005615">
    <property type="term" value="C:extracellular space"/>
    <property type="evidence" value="ECO:0007005"/>
    <property type="project" value="BHF-UCL"/>
</dbReference>
<dbReference type="GO" id="GO:0005886">
    <property type="term" value="C:plasma membrane"/>
    <property type="evidence" value="ECO:0007669"/>
    <property type="project" value="UniProtKB-SubCell"/>
</dbReference>
<dbReference type="GO" id="GO:0098552">
    <property type="term" value="C:side of membrane"/>
    <property type="evidence" value="ECO:0007669"/>
    <property type="project" value="UniProtKB-KW"/>
</dbReference>
<dbReference type="GO" id="GO:0004222">
    <property type="term" value="F:metalloendopeptidase activity"/>
    <property type="evidence" value="ECO:0000250"/>
    <property type="project" value="MGI"/>
</dbReference>
<dbReference type="GO" id="GO:0008270">
    <property type="term" value="F:zinc ion binding"/>
    <property type="evidence" value="ECO:0007669"/>
    <property type="project" value="InterPro"/>
</dbReference>
<dbReference type="GO" id="GO:0001525">
    <property type="term" value="P:angiogenesis"/>
    <property type="evidence" value="ECO:0007669"/>
    <property type="project" value="UniProtKB-KW"/>
</dbReference>
<dbReference type="GO" id="GO:0030154">
    <property type="term" value="P:cell differentiation"/>
    <property type="evidence" value="ECO:0007669"/>
    <property type="project" value="UniProtKB-KW"/>
</dbReference>
<dbReference type="GO" id="GO:0030574">
    <property type="term" value="P:collagen catabolic process"/>
    <property type="evidence" value="ECO:0007669"/>
    <property type="project" value="UniProtKB-KW"/>
</dbReference>
<dbReference type="GO" id="GO:0001554">
    <property type="term" value="P:luteolysis"/>
    <property type="evidence" value="ECO:0007669"/>
    <property type="project" value="Ensembl"/>
</dbReference>
<dbReference type="GO" id="GO:0001541">
    <property type="term" value="P:ovarian follicle development"/>
    <property type="evidence" value="ECO:0007669"/>
    <property type="project" value="Ensembl"/>
</dbReference>
<dbReference type="GO" id="GO:0001542">
    <property type="term" value="P:ovulation from ovarian follicle"/>
    <property type="evidence" value="ECO:0007669"/>
    <property type="project" value="Ensembl"/>
</dbReference>
<dbReference type="GO" id="GO:0006508">
    <property type="term" value="P:proteolysis"/>
    <property type="evidence" value="ECO:0007669"/>
    <property type="project" value="UniProtKB-KW"/>
</dbReference>
<dbReference type="GO" id="GO:0051591">
    <property type="term" value="P:response to cAMP"/>
    <property type="evidence" value="ECO:0007669"/>
    <property type="project" value="Ensembl"/>
</dbReference>
<dbReference type="GO" id="GO:0009725">
    <property type="term" value="P:response to hormone"/>
    <property type="evidence" value="ECO:0007669"/>
    <property type="project" value="Ensembl"/>
</dbReference>
<dbReference type="CDD" id="cd00094">
    <property type="entry name" value="HX"/>
    <property type="match status" value="1"/>
</dbReference>
<dbReference type="CDD" id="cd04278">
    <property type="entry name" value="ZnMc_MMP"/>
    <property type="match status" value="1"/>
</dbReference>
<dbReference type="FunFam" id="2.110.10.10:FF:000008">
    <property type="entry name" value="Matrix metallopeptidase 19"/>
    <property type="match status" value="1"/>
</dbReference>
<dbReference type="FunFam" id="3.40.390.10:FF:000027">
    <property type="entry name" value="Matrix metallopeptidase 19"/>
    <property type="match status" value="1"/>
</dbReference>
<dbReference type="Gene3D" id="3.40.390.10">
    <property type="entry name" value="Collagenase (Catalytic Domain)"/>
    <property type="match status" value="1"/>
</dbReference>
<dbReference type="Gene3D" id="2.110.10.10">
    <property type="entry name" value="Hemopexin-like domain"/>
    <property type="match status" value="2"/>
</dbReference>
<dbReference type="InterPro" id="IPR000585">
    <property type="entry name" value="Hemopexin-like_dom"/>
</dbReference>
<dbReference type="InterPro" id="IPR036375">
    <property type="entry name" value="Hemopexin-like_dom_sf"/>
</dbReference>
<dbReference type="InterPro" id="IPR018487">
    <property type="entry name" value="Hemopexin-like_repeat"/>
</dbReference>
<dbReference type="InterPro" id="IPR018486">
    <property type="entry name" value="Hemopexin_CS"/>
</dbReference>
<dbReference type="InterPro" id="IPR033739">
    <property type="entry name" value="M10A_MMP"/>
</dbReference>
<dbReference type="InterPro" id="IPR024079">
    <property type="entry name" value="MetalloPept_cat_dom_sf"/>
</dbReference>
<dbReference type="InterPro" id="IPR001818">
    <property type="entry name" value="Pept_M10_metallopeptidase"/>
</dbReference>
<dbReference type="InterPro" id="IPR021190">
    <property type="entry name" value="Pept_M10A"/>
</dbReference>
<dbReference type="InterPro" id="IPR006026">
    <property type="entry name" value="Peptidase_Metallo"/>
</dbReference>
<dbReference type="InterPro" id="IPR002477">
    <property type="entry name" value="Peptidoglycan-bd-like"/>
</dbReference>
<dbReference type="InterPro" id="IPR036365">
    <property type="entry name" value="PGBD-like_sf"/>
</dbReference>
<dbReference type="PANTHER" id="PTHR10201">
    <property type="entry name" value="MATRIX METALLOPROTEINASE"/>
    <property type="match status" value="1"/>
</dbReference>
<dbReference type="PANTHER" id="PTHR10201:SF166">
    <property type="entry name" value="MATRIX METALLOPROTEINASE-19"/>
    <property type="match status" value="1"/>
</dbReference>
<dbReference type="Pfam" id="PF00045">
    <property type="entry name" value="Hemopexin"/>
    <property type="match status" value="4"/>
</dbReference>
<dbReference type="Pfam" id="PF00413">
    <property type="entry name" value="Peptidase_M10"/>
    <property type="match status" value="1"/>
</dbReference>
<dbReference type="Pfam" id="PF01471">
    <property type="entry name" value="PG_binding_1"/>
    <property type="match status" value="1"/>
</dbReference>
<dbReference type="PIRSF" id="PIRSF001191">
    <property type="entry name" value="Peptidase_M10A_matrix"/>
    <property type="match status" value="1"/>
</dbReference>
<dbReference type="PRINTS" id="PR00138">
    <property type="entry name" value="MATRIXIN"/>
</dbReference>
<dbReference type="SMART" id="SM00120">
    <property type="entry name" value="HX"/>
    <property type="match status" value="4"/>
</dbReference>
<dbReference type="SMART" id="SM00235">
    <property type="entry name" value="ZnMc"/>
    <property type="match status" value="1"/>
</dbReference>
<dbReference type="SUPFAM" id="SSF50923">
    <property type="entry name" value="Hemopexin-like domain"/>
    <property type="match status" value="1"/>
</dbReference>
<dbReference type="SUPFAM" id="SSF55486">
    <property type="entry name" value="Metalloproteases ('zincins'), catalytic domain"/>
    <property type="match status" value="1"/>
</dbReference>
<dbReference type="SUPFAM" id="SSF47090">
    <property type="entry name" value="PGBD-like"/>
    <property type="match status" value="1"/>
</dbReference>
<dbReference type="PROSITE" id="PS00024">
    <property type="entry name" value="HEMOPEXIN"/>
    <property type="match status" value="1"/>
</dbReference>
<dbReference type="PROSITE" id="PS51642">
    <property type="entry name" value="HEMOPEXIN_2"/>
    <property type="match status" value="4"/>
</dbReference>
<dbReference type="PROSITE" id="PS00142">
    <property type="entry name" value="ZINC_PROTEASE"/>
    <property type="match status" value="1"/>
</dbReference>
<proteinExistence type="evidence at transcript level"/>
<protein>
    <recommendedName>
        <fullName>Matrix metalloproteinase-19</fullName>
        <shortName>MMP-19</shortName>
        <ecNumber>3.4.24.-</ecNumber>
    </recommendedName>
    <alternativeName>
        <fullName>Matrix metalloproteinase RASI</fullName>
    </alternativeName>
</protein>
<reference key="1">
    <citation type="journal article" date="2000" name="Mol. Biol. Rep.">
        <title>Characterization, expression analysis and chromosomal mapping of mouse matrix metalloproteinase-19 (MMP-19).</title>
        <authorList>
            <person name="Caterina J.J."/>
            <person name="Shi J."/>
            <person name="Kozak C.A."/>
            <person name="Engler J.A."/>
            <person name="Birkedal-Hansen H."/>
        </authorList>
    </citation>
    <scope>NUCLEOTIDE SEQUENCE [MRNA]</scope>
    <source>
        <strain>C3H/HeJ</strain>
    </source>
</reference>
<reference key="2">
    <citation type="submission" date="1999-06" db="EMBL/GenBank/DDBJ databases">
        <title>Mmp19 encodes a GPI anchored matrix metalloprotease expressed in musculoskeletal, neural and epithelial tissues.</title>
        <authorList>
            <person name="Hurskainen T."/>
            <person name="Seldin M.F."/>
            <person name="Pendas A."/>
            <person name="Lopez-Otin C."/>
            <person name="Apte S.S."/>
        </authorList>
    </citation>
    <scope>NUCLEOTIDE SEQUENCE [MRNA]</scope>
</reference>
<reference key="3">
    <citation type="journal article" date="2000" name="Gene">
        <title>The murine ortholog of matrix metalloproteinase 19: its cloning, gene organization, and expression.</title>
        <authorList>
            <person name="Mueller M.S."/>
            <person name="Harnasch M."/>
            <person name="Kolb C."/>
            <person name="Kusch J."/>
            <person name="Sadowski T."/>
            <person name="Sedlacek R."/>
        </authorList>
    </citation>
    <scope>NUCLEOTIDE SEQUENCE [MRNA]</scope>
    <source>
        <strain>129/Ola</strain>
    </source>
</reference>
<reference key="4">
    <citation type="journal article" date="2005" name="Science">
        <title>The transcriptional landscape of the mammalian genome.</title>
        <authorList>
            <person name="Carninci P."/>
            <person name="Kasukawa T."/>
            <person name="Katayama S."/>
            <person name="Gough J."/>
            <person name="Frith M.C."/>
            <person name="Maeda N."/>
            <person name="Oyama R."/>
            <person name="Ravasi T."/>
            <person name="Lenhard B."/>
            <person name="Wells C."/>
            <person name="Kodzius R."/>
            <person name="Shimokawa K."/>
            <person name="Bajic V.B."/>
            <person name="Brenner S.E."/>
            <person name="Batalov S."/>
            <person name="Forrest A.R."/>
            <person name="Zavolan M."/>
            <person name="Davis M.J."/>
            <person name="Wilming L.G."/>
            <person name="Aidinis V."/>
            <person name="Allen J.E."/>
            <person name="Ambesi-Impiombato A."/>
            <person name="Apweiler R."/>
            <person name="Aturaliya R.N."/>
            <person name="Bailey T.L."/>
            <person name="Bansal M."/>
            <person name="Baxter L."/>
            <person name="Beisel K.W."/>
            <person name="Bersano T."/>
            <person name="Bono H."/>
            <person name="Chalk A.M."/>
            <person name="Chiu K.P."/>
            <person name="Choudhary V."/>
            <person name="Christoffels A."/>
            <person name="Clutterbuck D.R."/>
            <person name="Crowe M.L."/>
            <person name="Dalla E."/>
            <person name="Dalrymple B.P."/>
            <person name="de Bono B."/>
            <person name="Della Gatta G."/>
            <person name="di Bernardo D."/>
            <person name="Down T."/>
            <person name="Engstrom P."/>
            <person name="Fagiolini M."/>
            <person name="Faulkner G."/>
            <person name="Fletcher C.F."/>
            <person name="Fukushima T."/>
            <person name="Furuno M."/>
            <person name="Futaki S."/>
            <person name="Gariboldi M."/>
            <person name="Georgii-Hemming P."/>
            <person name="Gingeras T.R."/>
            <person name="Gojobori T."/>
            <person name="Green R.E."/>
            <person name="Gustincich S."/>
            <person name="Harbers M."/>
            <person name="Hayashi Y."/>
            <person name="Hensch T.K."/>
            <person name="Hirokawa N."/>
            <person name="Hill D."/>
            <person name="Huminiecki L."/>
            <person name="Iacono M."/>
            <person name="Ikeo K."/>
            <person name="Iwama A."/>
            <person name="Ishikawa T."/>
            <person name="Jakt M."/>
            <person name="Kanapin A."/>
            <person name="Katoh M."/>
            <person name="Kawasawa Y."/>
            <person name="Kelso J."/>
            <person name="Kitamura H."/>
            <person name="Kitano H."/>
            <person name="Kollias G."/>
            <person name="Krishnan S.P."/>
            <person name="Kruger A."/>
            <person name="Kummerfeld S.K."/>
            <person name="Kurochkin I.V."/>
            <person name="Lareau L.F."/>
            <person name="Lazarevic D."/>
            <person name="Lipovich L."/>
            <person name="Liu J."/>
            <person name="Liuni S."/>
            <person name="McWilliam S."/>
            <person name="Madan Babu M."/>
            <person name="Madera M."/>
            <person name="Marchionni L."/>
            <person name="Matsuda H."/>
            <person name="Matsuzawa S."/>
            <person name="Miki H."/>
            <person name="Mignone F."/>
            <person name="Miyake S."/>
            <person name="Morris K."/>
            <person name="Mottagui-Tabar S."/>
            <person name="Mulder N."/>
            <person name="Nakano N."/>
            <person name="Nakauchi H."/>
            <person name="Ng P."/>
            <person name="Nilsson R."/>
            <person name="Nishiguchi S."/>
            <person name="Nishikawa S."/>
            <person name="Nori F."/>
            <person name="Ohara O."/>
            <person name="Okazaki Y."/>
            <person name="Orlando V."/>
            <person name="Pang K.C."/>
            <person name="Pavan W.J."/>
            <person name="Pavesi G."/>
            <person name="Pesole G."/>
            <person name="Petrovsky N."/>
            <person name="Piazza S."/>
            <person name="Reed J."/>
            <person name="Reid J.F."/>
            <person name="Ring B.Z."/>
            <person name="Ringwald M."/>
            <person name="Rost B."/>
            <person name="Ruan Y."/>
            <person name="Salzberg S.L."/>
            <person name="Sandelin A."/>
            <person name="Schneider C."/>
            <person name="Schoenbach C."/>
            <person name="Sekiguchi K."/>
            <person name="Semple C.A."/>
            <person name="Seno S."/>
            <person name="Sessa L."/>
            <person name="Sheng Y."/>
            <person name="Shibata Y."/>
            <person name="Shimada H."/>
            <person name="Shimada K."/>
            <person name="Silva D."/>
            <person name="Sinclair B."/>
            <person name="Sperling S."/>
            <person name="Stupka E."/>
            <person name="Sugiura K."/>
            <person name="Sultana R."/>
            <person name="Takenaka Y."/>
            <person name="Taki K."/>
            <person name="Tammoja K."/>
            <person name="Tan S.L."/>
            <person name="Tang S."/>
            <person name="Taylor M.S."/>
            <person name="Tegner J."/>
            <person name="Teichmann S.A."/>
            <person name="Ueda H.R."/>
            <person name="van Nimwegen E."/>
            <person name="Verardo R."/>
            <person name="Wei C.L."/>
            <person name="Yagi K."/>
            <person name="Yamanishi H."/>
            <person name="Zabarovsky E."/>
            <person name="Zhu S."/>
            <person name="Zimmer A."/>
            <person name="Hide W."/>
            <person name="Bult C."/>
            <person name="Grimmond S.M."/>
            <person name="Teasdale R.D."/>
            <person name="Liu E.T."/>
            <person name="Brusic V."/>
            <person name="Quackenbush J."/>
            <person name="Wahlestedt C."/>
            <person name="Mattick J.S."/>
            <person name="Hume D.A."/>
            <person name="Kai C."/>
            <person name="Sasaki D."/>
            <person name="Tomaru Y."/>
            <person name="Fukuda S."/>
            <person name="Kanamori-Katayama M."/>
            <person name="Suzuki M."/>
            <person name="Aoki J."/>
            <person name="Arakawa T."/>
            <person name="Iida J."/>
            <person name="Imamura K."/>
            <person name="Itoh M."/>
            <person name="Kato T."/>
            <person name="Kawaji H."/>
            <person name="Kawagashira N."/>
            <person name="Kawashima T."/>
            <person name="Kojima M."/>
            <person name="Kondo S."/>
            <person name="Konno H."/>
            <person name="Nakano K."/>
            <person name="Ninomiya N."/>
            <person name="Nishio T."/>
            <person name="Okada M."/>
            <person name="Plessy C."/>
            <person name="Shibata K."/>
            <person name="Shiraki T."/>
            <person name="Suzuki S."/>
            <person name="Tagami M."/>
            <person name="Waki K."/>
            <person name="Watahiki A."/>
            <person name="Okamura-Oho Y."/>
            <person name="Suzuki H."/>
            <person name="Kawai J."/>
            <person name="Hayashizaki Y."/>
        </authorList>
    </citation>
    <scope>NUCLEOTIDE SEQUENCE [LARGE SCALE MRNA] OF 54-527</scope>
    <source>
        <strain>C57BL/6J</strain>
        <tissue>Lung</tissue>
    </source>
</reference>
<evidence type="ECO:0000250" key="1"/>
<evidence type="ECO:0000250" key="2">
    <source>
        <dbReference type="UniProtKB" id="Q99542"/>
    </source>
</evidence>
<evidence type="ECO:0000255" key="3"/>
<evidence type="ECO:0000255" key="4">
    <source>
        <dbReference type="PROSITE-ProRule" id="PRU10095"/>
    </source>
</evidence>
<evidence type="ECO:0000256" key="5">
    <source>
        <dbReference type="SAM" id="MobiDB-lite"/>
    </source>
</evidence>
<evidence type="ECO:0000305" key="6"/>
<comment type="function">
    <text evidence="1">Endopeptidase that degrades various components of the extracellular matrix, such as aggrecan and cartilage oligomeric matrix protein (comp), during development, haemostasis and pathological conditions (arthritic disease). May also play a role in neovascularization or angiogenesis (By similarity). Hydrolyzes collagen type IV, laminin, nidogen, nascin-C isoform, fibronectin, and type I gelatin (By similarity).</text>
</comment>
<comment type="cofactor">
    <cofactor evidence="1">
        <name>Zn(2+)</name>
        <dbReference type="ChEBI" id="CHEBI:29105"/>
    </cofactor>
    <text evidence="1">Binds 1 zinc ion per subunit.</text>
</comment>
<comment type="cofactor">
    <cofactor evidence="1">
        <name>Ca(2+)</name>
        <dbReference type="ChEBI" id="CHEBI:29108"/>
    </cofactor>
</comment>
<comment type="subcellular location">
    <subcellularLocation>
        <location evidence="6">Cell membrane</location>
        <topology evidence="6">Lipid-anchor</topology>
        <topology evidence="6">GPI-anchor</topology>
        <orientation evidence="6">Extracellular side</orientation>
    </subcellularLocation>
    <subcellularLocation>
        <location evidence="6">Secreted</location>
        <location evidence="6">Extracellular space</location>
        <location evidence="6">Extracellular matrix</location>
    </subcellularLocation>
</comment>
<comment type="tissue specificity">
    <text>Highly expressed in the liver. Expressed in the arterial tunica media of large blood vessels.</text>
</comment>
<comment type="developmental stage">
    <text>Expressed in proliferating chondrocytes in the chondroepiphysis during musculoskeletal development.</text>
</comment>
<comment type="domain">
    <text>The conserved cysteine present in the cysteine-switch motif binds the catalytic zinc ion, thus inhibiting the enzyme. The dissociation of the cysteine from the zinc ion upon the activation-peptide release activates the enzyme.</text>
</comment>
<comment type="PTM">
    <text evidence="1">Activated by autolytic cleavage after Lys-98.</text>
</comment>
<comment type="PTM">
    <text evidence="2">Tyrosine phosphorylated by PKDCC/VLK.</text>
</comment>
<comment type="similarity">
    <text evidence="6">Belongs to the peptidase M10A family.</text>
</comment>
<keyword id="KW-0037">Angiogenesis</keyword>
<keyword id="KW-0106">Calcium</keyword>
<keyword id="KW-1003">Cell membrane</keyword>
<keyword id="KW-0177">Collagen degradation</keyword>
<keyword id="KW-0217">Developmental protein</keyword>
<keyword id="KW-0221">Differentiation</keyword>
<keyword id="KW-1015">Disulfide bond</keyword>
<keyword id="KW-0272">Extracellular matrix</keyword>
<keyword id="KW-0325">Glycoprotein</keyword>
<keyword id="KW-0336">GPI-anchor</keyword>
<keyword id="KW-0378">Hydrolase</keyword>
<keyword id="KW-0449">Lipoprotein</keyword>
<keyword id="KW-0472">Membrane</keyword>
<keyword id="KW-0479">Metal-binding</keyword>
<keyword id="KW-0482">Metalloprotease</keyword>
<keyword id="KW-0597">Phosphoprotein</keyword>
<keyword id="KW-0645">Protease</keyword>
<keyword id="KW-1185">Reference proteome</keyword>
<keyword id="KW-0677">Repeat</keyword>
<keyword id="KW-0964">Secreted</keyword>
<keyword id="KW-0732">Signal</keyword>
<keyword id="KW-0862">Zinc</keyword>
<keyword id="KW-0865">Zymogen</keyword>
<accession>Q9JHI0</accession>
<accession>Q8C360</accession>
<sequence>MDWQQLWLAFLLPMTVSGRALGPTEKEAVLDYLLQYGYLQKPLEGADDFRLEDITEALRTFQEASGLPISGQMDDATRARMKQPRCGLEDPFNQKSLKYLLLGHWRKKNLTFRIFNVPSTLSLPRVRAALHQAFKYWSSVAPLTFREVKAGWADIRLSFHGRQSLYCSNTFDGPGKVLAHADIPELGSIHFDKDELWTEGTYQGVNLRIIAAHEVGHALGLGHSRYTQALMAPVYAGYQPFFKLHPDDVAGIQALYGKRSPETRDEEEETEMLTVSPVTAKPGPMPNPCSGEVDAMVLGPRGKTYAFKGDYVWTVTDSGPGPLFQISALWEGLPGNLDAAVYSPRTRRTHFFKGNKVWRYVDFKMSPGFPMKFNRVEPNLDAALYWPVNQKVFLFKGSGYWQWDELARTDLSRYPKPIKELFTGVPDRPSAAMSWQDGQVYFFKGKEYWRLNQQLRVAKGYPRNTTHWMHCGSQTPDTNSSTGDVTPSTTDTVLGTTPSTMGSTLDIPSATDSASLSFSANVTLLGA</sequence>
<feature type="signal peptide" evidence="3">
    <location>
        <begin position="1"/>
        <end position="18"/>
    </location>
</feature>
<feature type="propeptide" id="PRO_0000028828" evidence="1">
    <location>
        <begin position="19"/>
        <end position="98"/>
    </location>
</feature>
<feature type="chain" id="PRO_0000028829" description="Matrix metalloproteinase-19">
    <location>
        <begin position="99"/>
        <end position="512"/>
    </location>
</feature>
<feature type="propeptide" id="PRO_0000028830" description="Removed in mature form" evidence="3">
    <location>
        <begin position="513"/>
        <end position="527"/>
    </location>
</feature>
<feature type="repeat" description="Hemopexin 1">
    <location>
        <begin position="286"/>
        <end position="333"/>
    </location>
</feature>
<feature type="repeat" description="Hemopexin 2">
    <location>
        <begin position="334"/>
        <end position="372"/>
    </location>
</feature>
<feature type="repeat" description="Hemopexin 3">
    <location>
        <begin position="377"/>
        <end position="425"/>
    </location>
</feature>
<feature type="repeat" description="Hemopexin 4">
    <location>
        <begin position="426"/>
        <end position="471"/>
    </location>
</feature>
<feature type="region of interest" description="Disordered" evidence="5">
    <location>
        <begin position="473"/>
        <end position="500"/>
    </location>
</feature>
<feature type="short sequence motif" description="Cysteine switch" evidence="1">
    <location>
        <begin position="84"/>
        <end position="91"/>
    </location>
</feature>
<feature type="active site" evidence="4">
    <location>
        <position position="214"/>
    </location>
</feature>
<feature type="binding site" description="in inhibited form" evidence="1">
    <location>
        <position position="86"/>
    </location>
    <ligand>
        <name>Zn(2+)</name>
        <dbReference type="ChEBI" id="CHEBI:29105"/>
        <note>catalytic</note>
    </ligand>
</feature>
<feature type="binding site" evidence="4">
    <location>
        <position position="213"/>
    </location>
    <ligand>
        <name>Zn(2+)</name>
        <dbReference type="ChEBI" id="CHEBI:29105"/>
        <note>catalytic</note>
    </ligand>
</feature>
<feature type="binding site" evidence="4">
    <location>
        <position position="217"/>
    </location>
    <ligand>
        <name>Zn(2+)</name>
        <dbReference type="ChEBI" id="CHEBI:29105"/>
        <note>catalytic</note>
    </ligand>
</feature>
<feature type="binding site" evidence="4">
    <location>
        <position position="223"/>
    </location>
    <ligand>
        <name>Zn(2+)</name>
        <dbReference type="ChEBI" id="CHEBI:29105"/>
        <note>catalytic</note>
    </ligand>
</feature>
<feature type="lipid moiety-binding region" description="GPI-anchor amidated aspartate" evidence="3">
    <location>
        <position position="512"/>
    </location>
</feature>
<feature type="glycosylation site" description="N-linked (GlcNAc...) asparagine" evidence="3">
    <location>
        <position position="109"/>
    </location>
</feature>
<feature type="glycosylation site" description="N-linked (GlcNAc...) asparagine" evidence="3">
    <location>
        <position position="464"/>
    </location>
</feature>
<feature type="glycosylation site" description="N-linked (GlcNAc...) asparagine" evidence="3">
    <location>
        <position position="479"/>
    </location>
</feature>
<feature type="glycosylation site" description="N-linked (GlcNAc...) asparagine" evidence="3">
    <location>
        <position position="521"/>
    </location>
</feature>
<feature type="disulfide bond" evidence="1">
    <location>
        <begin position="289"/>
        <end position="471"/>
    </location>
</feature>